<accession>Q2JJM9</accession>
<reference key="1">
    <citation type="journal article" date="2007" name="ISME J.">
        <title>Population level functional diversity in a microbial community revealed by comparative genomic and metagenomic analyses.</title>
        <authorList>
            <person name="Bhaya D."/>
            <person name="Grossman A.R."/>
            <person name="Steunou A.-S."/>
            <person name="Khuri N."/>
            <person name="Cohan F.M."/>
            <person name="Hamamura N."/>
            <person name="Melendrez M.C."/>
            <person name="Bateson M.M."/>
            <person name="Ward D.M."/>
            <person name="Heidelberg J.F."/>
        </authorList>
    </citation>
    <scope>NUCLEOTIDE SEQUENCE [LARGE SCALE GENOMIC DNA]</scope>
    <source>
        <strain>JA-2-3B'a(2-13)</strain>
    </source>
</reference>
<feature type="chain" id="PRO_1000048425" description="Light-independent protochlorophyllide reductase subunit B">
    <location>
        <begin position="1"/>
        <end position="510"/>
    </location>
</feature>
<feature type="active site" description="Proton donor" evidence="1">
    <location>
        <position position="296"/>
    </location>
</feature>
<feature type="binding site" evidence="1">
    <location>
        <position position="36"/>
    </location>
    <ligand>
        <name>[4Fe-4S] cluster</name>
        <dbReference type="ChEBI" id="CHEBI:49883"/>
        <note>ligand shared with heterodimeric partner</note>
    </ligand>
</feature>
<feature type="binding site" evidence="1">
    <location>
        <begin position="431"/>
        <end position="432"/>
    </location>
    <ligand>
        <name>substrate</name>
    </ligand>
</feature>
<dbReference type="EC" id="1.3.7.7" evidence="1"/>
<dbReference type="EMBL" id="CP000240">
    <property type="protein sequence ID" value="ABD03138.1"/>
    <property type="molecule type" value="Genomic_DNA"/>
</dbReference>
<dbReference type="RefSeq" id="WP_011433773.1">
    <property type="nucleotide sequence ID" value="NC_007776.1"/>
</dbReference>
<dbReference type="SMR" id="Q2JJM9"/>
<dbReference type="STRING" id="321332.CYB_2193"/>
<dbReference type="KEGG" id="cyb:CYB_2193"/>
<dbReference type="eggNOG" id="COG2710">
    <property type="taxonomic scope" value="Bacteria"/>
</dbReference>
<dbReference type="HOGENOM" id="CLU_025470_0_0_3"/>
<dbReference type="OrthoDB" id="5717231at2"/>
<dbReference type="UniPathway" id="UPA00670"/>
<dbReference type="Proteomes" id="UP000001938">
    <property type="component" value="Chromosome"/>
</dbReference>
<dbReference type="GO" id="GO:0051539">
    <property type="term" value="F:4 iron, 4 sulfur cluster binding"/>
    <property type="evidence" value="ECO:0007669"/>
    <property type="project" value="UniProtKB-UniRule"/>
</dbReference>
<dbReference type="GO" id="GO:0005524">
    <property type="term" value="F:ATP binding"/>
    <property type="evidence" value="ECO:0007669"/>
    <property type="project" value="UniProtKB-UniRule"/>
</dbReference>
<dbReference type="GO" id="GO:0046872">
    <property type="term" value="F:metal ion binding"/>
    <property type="evidence" value="ECO:0007669"/>
    <property type="project" value="UniProtKB-KW"/>
</dbReference>
<dbReference type="GO" id="GO:0016730">
    <property type="term" value="F:oxidoreductase activity, acting on iron-sulfur proteins as donors"/>
    <property type="evidence" value="ECO:0007669"/>
    <property type="project" value="InterPro"/>
</dbReference>
<dbReference type="GO" id="GO:0016636">
    <property type="term" value="F:oxidoreductase activity, acting on the CH-CH group of donors, iron-sulfur protein as acceptor"/>
    <property type="evidence" value="ECO:0007669"/>
    <property type="project" value="UniProtKB-UniRule"/>
</dbReference>
<dbReference type="GO" id="GO:0036068">
    <property type="term" value="P:light-independent chlorophyll biosynthetic process"/>
    <property type="evidence" value="ECO:0007669"/>
    <property type="project" value="UniProtKB-UniRule"/>
</dbReference>
<dbReference type="GO" id="GO:0019685">
    <property type="term" value="P:photosynthesis, dark reaction"/>
    <property type="evidence" value="ECO:0007669"/>
    <property type="project" value="InterPro"/>
</dbReference>
<dbReference type="CDD" id="cd01981">
    <property type="entry name" value="Pchlide_reductase_B"/>
    <property type="match status" value="1"/>
</dbReference>
<dbReference type="Gene3D" id="1.20.89.20">
    <property type="match status" value="1"/>
</dbReference>
<dbReference type="Gene3D" id="3.40.50.1980">
    <property type="entry name" value="Nitrogenase molybdenum iron protein domain"/>
    <property type="match status" value="3"/>
</dbReference>
<dbReference type="Gene3D" id="1.10.8.550">
    <property type="entry name" value="Proto-chlorophyllide reductase 57 kD subunit B"/>
    <property type="match status" value="1"/>
</dbReference>
<dbReference type="HAMAP" id="MF_00353">
    <property type="entry name" value="ChlB_BchB"/>
    <property type="match status" value="1"/>
</dbReference>
<dbReference type="InterPro" id="IPR050152">
    <property type="entry name" value="ChlB/BchB/BchZ"/>
</dbReference>
<dbReference type="InterPro" id="IPR013580">
    <property type="entry name" value="LI-POR_suB-like_C"/>
</dbReference>
<dbReference type="InterPro" id="IPR000510">
    <property type="entry name" value="Nase/OxRdtase_comp1"/>
</dbReference>
<dbReference type="InterPro" id="IPR042298">
    <property type="entry name" value="P-CP_red_C"/>
</dbReference>
<dbReference type="InterPro" id="IPR005969">
    <property type="entry name" value="Protochl_reductB"/>
</dbReference>
<dbReference type="InterPro" id="IPR016209">
    <property type="entry name" value="Protochlorophyllide_Rdtase"/>
</dbReference>
<dbReference type="NCBIfam" id="TIGR01278">
    <property type="entry name" value="DPOR_BchB"/>
    <property type="match status" value="1"/>
</dbReference>
<dbReference type="PANTHER" id="PTHR33712">
    <property type="entry name" value="LIGHT-INDEPENDENT PROTOCHLOROPHYLLIDE REDUCTASE SUBUNIT B"/>
    <property type="match status" value="1"/>
</dbReference>
<dbReference type="PANTHER" id="PTHR33712:SF7">
    <property type="entry name" value="LIGHT-INDEPENDENT PROTOCHLOROPHYLLIDE REDUCTASE SUBUNIT B"/>
    <property type="match status" value="1"/>
</dbReference>
<dbReference type="Pfam" id="PF00148">
    <property type="entry name" value="Oxidored_nitro"/>
    <property type="match status" value="1"/>
</dbReference>
<dbReference type="Pfam" id="PF08369">
    <property type="entry name" value="PCP_red"/>
    <property type="match status" value="1"/>
</dbReference>
<dbReference type="PIRSF" id="PIRSF000163">
    <property type="entry name" value="PCP_ChlB"/>
    <property type="match status" value="1"/>
</dbReference>
<dbReference type="SUPFAM" id="SSF53807">
    <property type="entry name" value="Helical backbone' metal receptor"/>
    <property type="match status" value="1"/>
</dbReference>
<organism>
    <name type="scientific">Synechococcus sp. (strain JA-2-3B'a(2-13))</name>
    <name type="common">Cyanobacteria bacterium Yellowstone B-Prime</name>
    <dbReference type="NCBI Taxonomy" id="321332"/>
    <lineage>
        <taxon>Bacteria</taxon>
        <taxon>Bacillati</taxon>
        <taxon>Cyanobacteriota</taxon>
        <taxon>Cyanophyceae</taxon>
        <taxon>Synechococcales</taxon>
        <taxon>Synechococcaceae</taxon>
        <taxon>Synechococcus</taxon>
    </lineage>
</organism>
<proteinExistence type="inferred from homology"/>
<keyword id="KW-0004">4Fe-4S</keyword>
<keyword id="KW-0067">ATP-binding</keyword>
<keyword id="KW-0149">Chlorophyll biosynthesis</keyword>
<keyword id="KW-0408">Iron</keyword>
<keyword id="KW-0411">Iron-sulfur</keyword>
<keyword id="KW-0479">Metal-binding</keyword>
<keyword id="KW-0547">Nucleotide-binding</keyword>
<keyword id="KW-0560">Oxidoreductase</keyword>
<keyword id="KW-0602">Photosynthesis</keyword>
<keyword id="KW-1185">Reference proteome</keyword>
<evidence type="ECO:0000255" key="1">
    <source>
        <dbReference type="HAMAP-Rule" id="MF_00353"/>
    </source>
</evidence>
<gene>
    <name evidence="1" type="primary">chlB</name>
    <name type="ordered locus">CYB_2193</name>
</gene>
<sequence length="510" mass="57500">MKLAYWMYAGPAHIGTLRVASSFKNVHSIMHAPLGDDYFNVMRSMLERERDFTPVTTSVVDRQVLARGSDEKVIRNIVRKDGEEQPDLIVVTPTCTSSILQEDLHHFVRQAQLASRCDVVLADVNHYRVNELQAADRTLQQIVEFYITKARKSGELDGLPQKTERPSCNILGISSLGFHNAHDLRELKALLRDLDIDLNLVIPQGASVHDLKHLGRAWFNVVPYRELGPMTARYLQQEFGMPYIEITPMGVVETARFIRQIQQILNEQGIPVDYEAYIQEQTLHISQAAWFSRSIDCQNLTGKKAVVFGDSTHAAAITKILAREMGIHVVWAGSYCTYDGEWFQAEVGEYCDQILMTEDHTRVADAIAQAEPAAIFGTQMERHVGKRLRIPCGVISAPIHVQDFPIGYRPFLGYEGANQIVDLIYNSFTLGMEDHLLEIFGGHDTKEVIHKSLSADSDLIWTREAQAELDKVPGFVRGKVKRNTEKFARERGLTEISVEVMYAAKEAFGA</sequence>
<name>CHLB_SYNJB</name>
<protein>
    <recommendedName>
        <fullName evidence="1">Light-independent protochlorophyllide reductase subunit B</fullName>
        <shortName evidence="1">DPOR subunit B</shortName>
        <shortName evidence="1">LI-POR subunit B</shortName>
        <ecNumber evidence="1">1.3.7.7</ecNumber>
    </recommendedName>
</protein>
<comment type="function">
    <text evidence="1">Component of the dark-operative protochlorophyllide reductase (DPOR) that uses Mg-ATP and reduced ferredoxin to reduce ring D of protochlorophyllide (Pchlide) to form chlorophyllide a (Chlide). This reaction is light-independent. The NB-protein (ChlN-ChlB) is the catalytic component of the complex.</text>
</comment>
<comment type="catalytic activity">
    <reaction evidence="1">
        <text>chlorophyllide a + oxidized 2[4Fe-4S]-[ferredoxin] + 2 ADP + 2 phosphate = protochlorophyllide a + reduced 2[4Fe-4S]-[ferredoxin] + 2 ATP + 2 H2O</text>
        <dbReference type="Rhea" id="RHEA:28202"/>
        <dbReference type="Rhea" id="RHEA-COMP:10002"/>
        <dbReference type="Rhea" id="RHEA-COMP:10004"/>
        <dbReference type="ChEBI" id="CHEBI:15377"/>
        <dbReference type="ChEBI" id="CHEBI:30616"/>
        <dbReference type="ChEBI" id="CHEBI:33722"/>
        <dbReference type="ChEBI" id="CHEBI:33723"/>
        <dbReference type="ChEBI" id="CHEBI:43474"/>
        <dbReference type="ChEBI" id="CHEBI:83348"/>
        <dbReference type="ChEBI" id="CHEBI:83350"/>
        <dbReference type="ChEBI" id="CHEBI:456216"/>
        <dbReference type="EC" id="1.3.7.7"/>
    </reaction>
</comment>
<comment type="cofactor">
    <cofactor evidence="1">
        <name>[4Fe-4S] cluster</name>
        <dbReference type="ChEBI" id="CHEBI:49883"/>
    </cofactor>
    <text evidence="1">Binds 1 [4Fe-4S] cluster per heterodimer. The cluster is bound at the heterodimer interface by residues from both subunits.</text>
</comment>
<comment type="pathway">
    <text evidence="1">Porphyrin-containing compound metabolism; chlorophyll biosynthesis (light-independent).</text>
</comment>
<comment type="subunit">
    <text evidence="1">Protochlorophyllide reductase is composed of three subunits; ChlL, ChlN and ChlB. Forms a heterotetramer of two ChlB and two ChlN subunits.</text>
</comment>
<comment type="similarity">
    <text evidence="1">Belongs to the ChlB/BchB/BchZ family.</text>
</comment>